<dbReference type="EMBL" id="AAFI02000177">
    <property type="protein sequence ID" value="EAL61670.1"/>
    <property type="molecule type" value="Genomic_DNA"/>
</dbReference>
<dbReference type="RefSeq" id="XP_635171.1">
    <property type="nucleotide sequence ID" value="XM_630079.1"/>
</dbReference>
<dbReference type="SMR" id="Q54ER9"/>
<dbReference type="FunCoup" id="Q54ER9">
    <property type="interactions" value="473"/>
</dbReference>
<dbReference type="STRING" id="44689.Q54ER9"/>
<dbReference type="GlyGen" id="Q54ER9">
    <property type="glycosylation" value="1 site"/>
</dbReference>
<dbReference type="PaxDb" id="44689-DDB0220084"/>
<dbReference type="EnsemblProtists" id="EAL61670">
    <property type="protein sequence ID" value="EAL61670"/>
    <property type="gene ID" value="DDB_G0291372"/>
</dbReference>
<dbReference type="GeneID" id="8628117"/>
<dbReference type="KEGG" id="ddi:DDB_G0291372"/>
<dbReference type="dictyBase" id="DDB_G0291372">
    <property type="gene designation" value="dimB"/>
</dbReference>
<dbReference type="VEuPathDB" id="AmoebaDB:DDB_G0291372"/>
<dbReference type="eggNOG" id="ENOG502REN0">
    <property type="taxonomic scope" value="Eukaryota"/>
</dbReference>
<dbReference type="HOGENOM" id="CLU_453776_0_0_1"/>
<dbReference type="InParanoid" id="Q54ER9"/>
<dbReference type="OMA" id="DFANMEM"/>
<dbReference type="PhylomeDB" id="Q54ER9"/>
<dbReference type="PRO" id="PR:Q54ER9"/>
<dbReference type="Proteomes" id="UP000002195">
    <property type="component" value="Chromosome 6"/>
</dbReference>
<dbReference type="GO" id="GO:0005737">
    <property type="term" value="C:cytoplasm"/>
    <property type="evidence" value="ECO:0000314"/>
    <property type="project" value="dictyBase"/>
</dbReference>
<dbReference type="GO" id="GO:0005634">
    <property type="term" value="C:nucleus"/>
    <property type="evidence" value="ECO:0000314"/>
    <property type="project" value="dictyBase"/>
</dbReference>
<dbReference type="GO" id="GO:0003700">
    <property type="term" value="F:DNA-binding transcription factor activity"/>
    <property type="evidence" value="ECO:0007669"/>
    <property type="project" value="InterPro"/>
</dbReference>
<dbReference type="GO" id="GO:0042802">
    <property type="term" value="F:identical protein binding"/>
    <property type="evidence" value="ECO:0000353"/>
    <property type="project" value="dictyBase"/>
</dbReference>
<dbReference type="GO" id="GO:0043565">
    <property type="term" value="F:sequence-specific DNA binding"/>
    <property type="evidence" value="ECO:0000314"/>
    <property type="project" value="dictyBase"/>
</dbReference>
<dbReference type="GO" id="GO:0000976">
    <property type="term" value="F:transcription cis-regulatory region binding"/>
    <property type="evidence" value="ECO:0000314"/>
    <property type="project" value="dictyBase"/>
</dbReference>
<dbReference type="GO" id="GO:1903014">
    <property type="term" value="P:cellular response to differentiation-inducing factor 1"/>
    <property type="evidence" value="ECO:0007005"/>
    <property type="project" value="dictyBase"/>
</dbReference>
<dbReference type="GO" id="GO:0045184">
    <property type="term" value="P:establishment of protein localization"/>
    <property type="evidence" value="ECO:0000315"/>
    <property type="project" value="dictyBase"/>
</dbReference>
<dbReference type="GO" id="GO:0010629">
    <property type="term" value="P:negative regulation of gene expression"/>
    <property type="evidence" value="ECO:0000315"/>
    <property type="project" value="dictyBase"/>
</dbReference>
<dbReference type="GO" id="GO:0043069">
    <property type="term" value="P:negative regulation of programmed cell death"/>
    <property type="evidence" value="ECO:0000315"/>
    <property type="project" value="dictyBase"/>
</dbReference>
<dbReference type="GO" id="GO:0010628">
    <property type="term" value="P:positive regulation of gene expression"/>
    <property type="evidence" value="ECO:0000315"/>
    <property type="project" value="dictyBase"/>
</dbReference>
<dbReference type="GO" id="GO:0031287">
    <property type="term" value="P:positive regulation of sorocarp stalk cell differentiation"/>
    <property type="evidence" value="ECO:0000315"/>
    <property type="project" value="dictyBase"/>
</dbReference>
<dbReference type="GO" id="GO:0010468">
    <property type="term" value="P:regulation of gene expression"/>
    <property type="evidence" value="ECO:0000318"/>
    <property type="project" value="GO_Central"/>
</dbReference>
<dbReference type="GO" id="GO:0031153">
    <property type="term" value="P:slug development involved in sorocarp development"/>
    <property type="evidence" value="ECO:0000315"/>
    <property type="project" value="dictyBase"/>
</dbReference>
<dbReference type="GO" id="GO:0030587">
    <property type="term" value="P:sorocarp development"/>
    <property type="evidence" value="ECO:0000270"/>
    <property type="project" value="dictyBase"/>
</dbReference>
<dbReference type="CDD" id="cd14686">
    <property type="entry name" value="bZIP"/>
    <property type="match status" value="1"/>
</dbReference>
<dbReference type="Gene3D" id="1.20.5.170">
    <property type="match status" value="1"/>
</dbReference>
<dbReference type="InterPro" id="IPR004827">
    <property type="entry name" value="bZIP"/>
</dbReference>
<dbReference type="InterPro" id="IPR046347">
    <property type="entry name" value="bZIP_sf"/>
</dbReference>
<dbReference type="PANTHER" id="PTHR14312:SF7">
    <property type="entry name" value="BASIC-LEUCINE ZIPPER TRANSCRIPTION FACTOR B-RELATED"/>
    <property type="match status" value="1"/>
</dbReference>
<dbReference type="PANTHER" id="PTHR14312">
    <property type="entry name" value="CREB/ATF BZIP TRANSCRIPTION FACTOR"/>
    <property type="match status" value="1"/>
</dbReference>
<dbReference type="Pfam" id="PF00170">
    <property type="entry name" value="bZIP_1"/>
    <property type="match status" value="1"/>
</dbReference>
<dbReference type="SUPFAM" id="SSF57959">
    <property type="entry name" value="Leucine zipper domain"/>
    <property type="match status" value="1"/>
</dbReference>
<dbReference type="PROSITE" id="PS50217">
    <property type="entry name" value="BZIP"/>
    <property type="match status" value="1"/>
</dbReference>
<keyword id="KW-0175">Coiled coil</keyword>
<keyword id="KW-0238">DNA-binding</keyword>
<keyword id="KW-0539">Nucleus</keyword>
<keyword id="KW-1185">Reference proteome</keyword>
<keyword id="KW-0804">Transcription</keyword>
<keyword id="KW-0805">Transcription regulation</keyword>
<reference key="1">
    <citation type="journal article" date="2005" name="Nature">
        <title>The genome of the social amoeba Dictyostelium discoideum.</title>
        <authorList>
            <person name="Eichinger L."/>
            <person name="Pachebat J.A."/>
            <person name="Gloeckner G."/>
            <person name="Rajandream M.A."/>
            <person name="Sucgang R."/>
            <person name="Berriman M."/>
            <person name="Song J."/>
            <person name="Olsen R."/>
            <person name="Szafranski K."/>
            <person name="Xu Q."/>
            <person name="Tunggal B."/>
            <person name="Kummerfeld S."/>
            <person name="Madera M."/>
            <person name="Konfortov B.A."/>
            <person name="Rivero F."/>
            <person name="Bankier A.T."/>
            <person name="Lehmann R."/>
            <person name="Hamlin N."/>
            <person name="Davies R."/>
            <person name="Gaudet P."/>
            <person name="Fey P."/>
            <person name="Pilcher K."/>
            <person name="Chen G."/>
            <person name="Saunders D."/>
            <person name="Sodergren E.J."/>
            <person name="Davis P."/>
            <person name="Kerhornou A."/>
            <person name="Nie X."/>
            <person name="Hall N."/>
            <person name="Anjard C."/>
            <person name="Hemphill L."/>
            <person name="Bason N."/>
            <person name="Farbrother P."/>
            <person name="Desany B."/>
            <person name="Just E."/>
            <person name="Morio T."/>
            <person name="Rost R."/>
            <person name="Churcher C.M."/>
            <person name="Cooper J."/>
            <person name="Haydock S."/>
            <person name="van Driessche N."/>
            <person name="Cronin A."/>
            <person name="Goodhead I."/>
            <person name="Muzny D.M."/>
            <person name="Mourier T."/>
            <person name="Pain A."/>
            <person name="Lu M."/>
            <person name="Harper D."/>
            <person name="Lindsay R."/>
            <person name="Hauser H."/>
            <person name="James K.D."/>
            <person name="Quiles M."/>
            <person name="Madan Babu M."/>
            <person name="Saito T."/>
            <person name="Buchrieser C."/>
            <person name="Wardroper A."/>
            <person name="Felder M."/>
            <person name="Thangavelu M."/>
            <person name="Johnson D."/>
            <person name="Knights A."/>
            <person name="Loulseged H."/>
            <person name="Mungall K.L."/>
            <person name="Oliver K."/>
            <person name="Price C."/>
            <person name="Quail M.A."/>
            <person name="Urushihara H."/>
            <person name="Hernandez J."/>
            <person name="Rabbinowitsch E."/>
            <person name="Steffen D."/>
            <person name="Sanders M."/>
            <person name="Ma J."/>
            <person name="Kohara Y."/>
            <person name="Sharp S."/>
            <person name="Simmonds M.N."/>
            <person name="Spiegler S."/>
            <person name="Tivey A."/>
            <person name="Sugano S."/>
            <person name="White B."/>
            <person name="Walker D."/>
            <person name="Woodward J.R."/>
            <person name="Winckler T."/>
            <person name="Tanaka Y."/>
            <person name="Shaulsky G."/>
            <person name="Schleicher M."/>
            <person name="Weinstock G.M."/>
            <person name="Rosenthal A."/>
            <person name="Cox E.C."/>
            <person name="Chisholm R.L."/>
            <person name="Gibbs R.A."/>
            <person name="Loomis W.F."/>
            <person name="Platzer M."/>
            <person name="Kay R.R."/>
            <person name="Williams J.G."/>
            <person name="Dear P.H."/>
            <person name="Noegel A.A."/>
            <person name="Barrell B.G."/>
            <person name="Kuspa A."/>
        </authorList>
    </citation>
    <scope>NUCLEOTIDE SEQUENCE [LARGE SCALE GENOMIC DNA]</scope>
    <source>
        <strain>AX4</strain>
    </source>
</reference>
<reference key="2">
    <citation type="journal article" date="2006" name="Development">
        <title>The Dictyostelium bZIP transcription factor DimB regulates prestalk-specific gene expression.</title>
        <authorList>
            <person name="Zhukovskaya N.V."/>
            <person name="Fukuzawa M."/>
            <person name="Yamada Y."/>
            <person name="Araki T."/>
            <person name="Williams J.G."/>
        </authorList>
    </citation>
    <scope>FUNCTION</scope>
    <scope>SUBCELLULAR LOCATION</scope>
    <scope>DEVELOPMENTAL STAGE</scope>
    <scope>DISRUPTION PHENOTYPE</scope>
</reference>
<reference key="3">
    <citation type="journal article" date="2006" name="Development">
        <title>bZIP transcription factor interactions regulate DIF responses in Dictyostelium.</title>
        <authorList>
            <person name="Huang E."/>
            <person name="Blagg S.L."/>
            <person name="Keller T."/>
            <person name="Katoh M."/>
            <person name="Shaulsky G."/>
            <person name="Thompson C.R.L."/>
        </authorList>
    </citation>
    <scope>FUNCTION</scope>
    <scope>INTERACTION WITH DIMA</scope>
    <scope>SUBCELLULAR LOCATION</scope>
    <scope>DEVELOPMENTAL STAGE</scope>
    <scope>DISRUPTION PHENOTYPE</scope>
</reference>
<reference key="4">
    <citation type="journal article" date="2006" name="EMBO Rep.">
        <title>Transcriptional regulation of Dictyostelium pattern formation.</title>
        <authorList>
            <person name="Williams J.G."/>
        </authorList>
    </citation>
    <scope>FUNCTION</scope>
</reference>
<evidence type="ECO:0000250" key="1"/>
<evidence type="ECO:0000255" key="2"/>
<evidence type="ECO:0000255" key="3">
    <source>
        <dbReference type="PROSITE-ProRule" id="PRU00978"/>
    </source>
</evidence>
<evidence type="ECO:0000256" key="4">
    <source>
        <dbReference type="SAM" id="MobiDB-lite"/>
    </source>
</evidence>
<evidence type="ECO:0000269" key="5">
    <source>
    </source>
</evidence>
<evidence type="ECO:0000269" key="6">
    <source>
    </source>
</evidence>
<evidence type="ECO:0000269" key="7">
    <source>
    </source>
</evidence>
<evidence type="ECO:0000305" key="8"/>
<protein>
    <recommendedName>
        <fullName>Basic-leucine zipper transcription factor B</fullName>
    </recommendedName>
</protein>
<accession>Q54ER9</accession>
<name>DIMB_DICDI</name>
<proteinExistence type="evidence at protein level"/>
<gene>
    <name type="primary">dimB</name>
    <name type="ORF">DDB_G0291372</name>
</gene>
<feature type="chain" id="PRO_0000384444" description="Basic-leucine zipper transcription factor B">
    <location>
        <begin position="1"/>
        <end position="602"/>
    </location>
</feature>
<feature type="domain" description="bZIP" evidence="3">
    <location>
        <begin position="113"/>
        <end position="176"/>
    </location>
</feature>
<feature type="region of interest" description="Disordered" evidence="4">
    <location>
        <begin position="1"/>
        <end position="128"/>
    </location>
</feature>
<feature type="region of interest" description="Basic motif" evidence="3">
    <location>
        <begin position="115"/>
        <end position="135"/>
    </location>
</feature>
<feature type="region of interest" description="Leucine-zipper" evidence="3">
    <location>
        <begin position="138"/>
        <end position="145"/>
    </location>
</feature>
<feature type="region of interest" description="Disordered" evidence="4">
    <location>
        <begin position="328"/>
        <end position="401"/>
    </location>
</feature>
<feature type="region of interest" description="Disordered" evidence="4">
    <location>
        <begin position="525"/>
        <end position="602"/>
    </location>
</feature>
<feature type="coiled-coil region" evidence="2">
    <location>
        <begin position="58"/>
        <end position="94"/>
    </location>
</feature>
<feature type="coiled-coil region" evidence="2">
    <location>
        <begin position="509"/>
        <end position="552"/>
    </location>
</feature>
<feature type="compositionally biased region" description="Polar residues" evidence="4">
    <location>
        <begin position="1"/>
        <end position="10"/>
    </location>
</feature>
<feature type="compositionally biased region" description="Low complexity" evidence="4">
    <location>
        <begin position="11"/>
        <end position="54"/>
    </location>
</feature>
<feature type="compositionally biased region" description="Low complexity" evidence="4">
    <location>
        <begin position="66"/>
        <end position="102"/>
    </location>
</feature>
<feature type="compositionally biased region" description="Low complexity" evidence="4">
    <location>
        <begin position="336"/>
        <end position="350"/>
    </location>
</feature>
<feature type="compositionally biased region" description="Low complexity" evidence="4">
    <location>
        <begin position="358"/>
        <end position="401"/>
    </location>
</feature>
<feature type="compositionally biased region" description="Low complexity" evidence="4">
    <location>
        <begin position="525"/>
        <end position="592"/>
    </location>
</feature>
<feature type="compositionally biased region" description="Polar residues" evidence="4">
    <location>
        <begin position="593"/>
        <end position="602"/>
    </location>
</feature>
<organism>
    <name type="scientific">Dictyostelium discoideum</name>
    <name type="common">Social amoeba</name>
    <dbReference type="NCBI Taxonomy" id="44689"/>
    <lineage>
        <taxon>Eukaryota</taxon>
        <taxon>Amoebozoa</taxon>
        <taxon>Evosea</taxon>
        <taxon>Eumycetozoa</taxon>
        <taxon>Dictyostelia</taxon>
        <taxon>Dictyosteliales</taxon>
        <taxon>Dictyosteliaceae</taxon>
        <taxon>Dictyostelium</taxon>
    </lineage>
</organism>
<sequence length="602" mass="68452">MNQFYQSTTGGQQNNNNGNQFQQYQPQQQQQFQQYSPSNANNNNTTTTTTTSTSKKGKNKDNQSKQQQIQQQQIQQQQQQQQQQQQQIQQQSVDTPSSYNGDGSDDGSDTERENKKNRNRVNQNLASRNYRQRKKEYIKEIEEKLAVLALENDQLKKENINLKKGGGVEIMKPDPAFITMMMEAKQIIIQLDVAIKKNDERSLIYLLQLFHLSIEKRHTIVEREVEKMVHPYTQAKLAAMGYVPSLENPMISSISGPSSDGWWTMYISEAQITEEQAKAIKQLRSNHWKADIELRNEREKLDRSIKEFYLNRVMVFPTNERLNKSFATNLSLSDGPNPTSPNSSSVTQSTLVRPSPGLTLLNNLNEENNNSNNSSNSSNNNTTTNNNNNNSLTPTPNQNNNISNIAVNGTISVVNELGFSPINGNIDISEILEFTRKLEALKKNFVKQRTLMEDTHSALSSILTPKQEAMLLVRVHSSTRYDFANMEMLKNVWGSVIAKDTTSYPQPPTFSQQTQQLQQAQLQLQNQTKQQQQQLQNNNNNNNNNNNNNNSFNNSNNNNVQNNSSNPSTPGGNNDQQNIYYTSSPSIPSSPYNHHQQQPSRQ</sequence>
<comment type="function">
    <text evidence="1 5 6 7">Transcriptional regulator involved in DIF-1 signaling. DIF-1 (Differentiation Inducing Factor-1) is a signal molecule involved in the differentiation of pstO (prestalk-O) cells (By similarity). May be a direct activator of ecmA.</text>
</comment>
<comment type="subunit">
    <text evidence="1">Binds DNA as a dimer (By similarity). Heterodimerizes with dimA; in vitro. Also able to form homodimer; in vitro.</text>
</comment>
<comment type="subcellular location">
    <subcellularLocation>
        <location evidence="3 5 6">Nucleus</location>
    </subcellularLocation>
    <text>In response to DIF-1, it accumulates rapidly in the nucleus.</text>
</comment>
<comment type="developmental stage">
    <text evidence="5 6">Developmentally regulated with levels peaking at culmination.</text>
</comment>
<comment type="disruption phenotype">
    <text evidence="5 6">Following starvation, development proceeds normally only until the finger stage, when extremely long and thin fingers/slugs are produced. DimA and dimB double mutant has the same phenotype.</text>
</comment>
<comment type="similarity">
    <text evidence="8">Belongs to the bZIP family.</text>
</comment>